<protein>
    <recommendedName>
        <fullName>MAP3K7 C-terminal-like protein</fullName>
    </recommendedName>
    <alternativeName>
        <fullName>TAK1-like protein</fullName>
    </alternativeName>
</protein>
<comment type="interaction">
    <interactant intactId="EBI-748831">
        <id>P57077</id>
    </interactant>
    <interactant intactId="EBI-713355">
        <id>Q13227</id>
        <label>GPS2</label>
    </interactant>
    <organismsDiffer>false</organismsDiffer>
    <experiments>2</experiments>
</comment>
<comment type="interaction">
    <interactant intactId="EBI-10215880">
        <id>P57077-4</id>
    </interactant>
    <interactant intactId="EBI-8466265">
        <id>Q96MA6</id>
        <label>AK8</label>
    </interactant>
    <organismsDiffer>false</organismsDiffer>
    <experiments>6</experiments>
</comment>
<comment type="interaction">
    <interactant intactId="EBI-10215880">
        <id>P57077-4</id>
    </interactant>
    <interactant intactId="EBI-742054">
        <id>Q96D03</id>
        <label>DDIT4L</label>
    </interactant>
    <organismsDiffer>false</organismsDiffer>
    <experiments>3</experiments>
</comment>
<comment type="interaction">
    <interactant intactId="EBI-10215880">
        <id>P57077-4</id>
    </interactant>
    <interactant intactId="EBI-948001">
        <id>Q15323</id>
        <label>KRT31</label>
    </interactant>
    <organismsDiffer>false</organismsDiffer>
    <experiments>3</experiments>
</comment>
<comment type="interaction">
    <interactant intactId="EBI-10215880">
        <id>P57077-4</id>
    </interactant>
    <interactant intactId="EBI-1047093">
        <id>O76011</id>
        <label>KRT34</label>
    </interactant>
    <organismsDiffer>false</organismsDiffer>
    <experiments>3</experiments>
</comment>
<comment type="interaction">
    <interactant intactId="EBI-10215880">
        <id>P57077-4</id>
    </interactant>
    <interactant intactId="EBI-307352">
        <id>Q04864</id>
        <label>REL</label>
    </interactant>
    <organismsDiffer>false</organismsDiffer>
    <experiments>3</experiments>
</comment>
<comment type="interaction">
    <interactant intactId="EBI-10215880">
        <id>P57077-4</id>
    </interactant>
    <interactant intactId="EBI-359964">
        <id>Q8N5C8</id>
        <label>TAB3</label>
    </interactant>
    <organismsDiffer>false</organismsDiffer>
    <experiments>6</experiments>
</comment>
<comment type="interaction">
    <interactant intactId="EBI-10215880">
        <id>P57077-4</id>
    </interactant>
    <interactant intactId="EBI-1054489">
        <id>P22415</id>
        <label>USF1</label>
    </interactant>
    <organismsDiffer>false</organismsDiffer>
    <experiments>3</experiments>
</comment>
<comment type="alternative products">
    <event type="alternative splicing"/>
    <isoform>
        <id>P57077-4</id>
        <name>1</name>
        <name evidence="2">D</name>
        <sequence type="displayed"/>
    </isoform>
    <isoform>
        <id>P57077-1</id>
        <name>2</name>
        <name evidence="2">A</name>
        <sequence type="described" ref="VSP_060759"/>
    </isoform>
</comment>
<comment type="tissue specificity">
    <text evidence="1">Detected in lung and peripheral blood leukocytes. Expressed predominantly in peripheral blood leukocytes and ubiquitously in adult and fetal tissues. Also expressed strongly in breast carcinoma GI-101, colon adenocarcinoma GI-112, and prostatic adenocarcinoma PC3.</text>
</comment>
<comment type="domain">
    <text>Contains a C-terminal domain similar to that of the C-terminal section of MAP3K7.</text>
</comment>
<comment type="sequence caution" evidence="3">
    <conflict type="erroneous translation">
        <sequence resource="EMBL-CDS" id="AAF81752"/>
    </conflict>
    <text>Wrong choice of frame.</text>
</comment>
<comment type="sequence caution" evidence="3">
    <conflict type="erroneous translation">
        <sequence resource="EMBL-CDS" id="AAF81753"/>
    </conflict>
    <text>Wrong choice of frame.</text>
</comment>
<comment type="sequence caution" evidence="3">
    <conflict type="erroneous gene model prediction">
        <sequence resource="EMBL-CDS" id="CAB90434"/>
    </conflict>
</comment>
<reference key="1">
    <citation type="submission" date="2000-05" db="EMBL/GenBank/DDBJ databases">
        <title>Cloning and characterization of a new gene, C21orf7, similar to the TAB2-binding region of TAK1.</title>
        <authorList>
            <person name="Solans A."/>
            <person name="Domenech A."/>
            <person name="Estivill X."/>
            <person name="de la Luna S."/>
        </authorList>
    </citation>
    <scope>NUCLEOTIDE SEQUENCE (ISOFORMS 1 AND 2)</scope>
</reference>
<reference key="2">
    <citation type="journal article" date="2001" name="Genomics">
        <title>From PREDs and open reading frames to cDNA isolation: revisiting the human chromosome 21 transcription map.</title>
        <authorList>
            <person name="Reymond A."/>
            <person name="Friedli M."/>
            <person name="Neergaard Henrichsen C."/>
            <person name="Chapot F."/>
            <person name="Deutsch S."/>
            <person name="Ucla C."/>
            <person name="Rossier C."/>
            <person name="Lyle R."/>
            <person name="Guipponi M."/>
            <person name="Antonarakis S.E."/>
        </authorList>
    </citation>
    <scope>NUCLEOTIDE SEQUENCE (ISOFORM 1)</scope>
</reference>
<reference key="3">
    <citation type="journal article" date="2004" name="Biochem. Genet.">
        <title>Cloning and characterization of a novel human TGF-beta activated kinase-like gene.</title>
        <authorList>
            <person name="Li J."/>
            <person name="Ji C."/>
            <person name="Yang Q."/>
            <person name="Chen J."/>
            <person name="Gu S."/>
            <person name="Ying K."/>
            <person name="Xie Y."/>
            <person name="Mao Y."/>
        </authorList>
    </citation>
    <scope>NUCLEOTIDE SEQUENCE [MRNA] (ISOFORM 2)</scope>
    <scope>TISSUE SPECIFICITY</scope>
    <source>
        <tissue>Fetal brain</tissue>
    </source>
</reference>
<reference key="4">
    <citation type="journal article" date="2007" name="BMC Genomics">
        <title>The full-ORF clone resource of the German cDNA consortium.</title>
        <authorList>
            <person name="Bechtel S."/>
            <person name="Rosenfelder H."/>
            <person name="Duda A."/>
            <person name="Schmidt C.P."/>
            <person name="Ernst U."/>
            <person name="Wellenreuther R."/>
            <person name="Mehrle A."/>
            <person name="Schuster C."/>
            <person name="Bahr A."/>
            <person name="Bloecker H."/>
            <person name="Heubner D."/>
            <person name="Hoerlein A."/>
            <person name="Michel G."/>
            <person name="Wedler H."/>
            <person name="Koehrer K."/>
            <person name="Ottenwaelder B."/>
            <person name="Poustka A."/>
            <person name="Wiemann S."/>
            <person name="Schupp I."/>
        </authorList>
    </citation>
    <scope>NUCLEOTIDE SEQUENCE [LARGE SCALE MRNA] (ISOFORM 1)</scope>
    <source>
        <tissue>Brain</tissue>
    </source>
</reference>
<reference key="5">
    <citation type="journal article" date="2000" name="Nature">
        <title>The DNA sequence of human chromosome 21.</title>
        <authorList>
            <person name="Hattori M."/>
            <person name="Fujiyama A."/>
            <person name="Taylor T.D."/>
            <person name="Watanabe H."/>
            <person name="Yada T."/>
            <person name="Park H.-S."/>
            <person name="Toyoda A."/>
            <person name="Ishii K."/>
            <person name="Totoki Y."/>
            <person name="Choi D.-K."/>
            <person name="Groner Y."/>
            <person name="Soeda E."/>
            <person name="Ohki M."/>
            <person name="Takagi T."/>
            <person name="Sakaki Y."/>
            <person name="Taudien S."/>
            <person name="Blechschmidt K."/>
            <person name="Polley A."/>
            <person name="Menzel U."/>
            <person name="Delabar J."/>
            <person name="Kumpf K."/>
            <person name="Lehmann R."/>
            <person name="Patterson D."/>
            <person name="Reichwald K."/>
            <person name="Rump A."/>
            <person name="Schillhabel M."/>
            <person name="Schudy A."/>
            <person name="Zimmermann W."/>
            <person name="Rosenthal A."/>
            <person name="Kudoh J."/>
            <person name="Shibuya K."/>
            <person name="Kawasaki K."/>
            <person name="Asakawa S."/>
            <person name="Shintani A."/>
            <person name="Sasaki T."/>
            <person name="Nagamine K."/>
            <person name="Mitsuyama S."/>
            <person name="Antonarakis S.E."/>
            <person name="Minoshima S."/>
            <person name="Shimizu N."/>
            <person name="Nordsiek G."/>
            <person name="Hornischer K."/>
            <person name="Brandt P."/>
            <person name="Scharfe M."/>
            <person name="Schoen O."/>
            <person name="Desario A."/>
            <person name="Reichelt J."/>
            <person name="Kauer G."/>
            <person name="Bloecker H."/>
            <person name="Ramser J."/>
            <person name="Beck A."/>
            <person name="Klages S."/>
            <person name="Hennig S."/>
            <person name="Riesselmann L."/>
            <person name="Dagand E."/>
            <person name="Wehrmeyer S."/>
            <person name="Borzym K."/>
            <person name="Gardiner K."/>
            <person name="Nizetic D."/>
            <person name="Francis F."/>
            <person name="Lehrach H."/>
            <person name="Reinhardt R."/>
            <person name="Yaspo M.-L."/>
        </authorList>
    </citation>
    <scope>NUCLEOTIDE SEQUENCE [LARGE SCALE GENOMIC DNA]</scope>
</reference>
<reference key="6">
    <citation type="submission" date="2005-09" db="EMBL/GenBank/DDBJ databases">
        <authorList>
            <person name="Mural R.J."/>
            <person name="Istrail S."/>
            <person name="Sutton G.G."/>
            <person name="Florea L."/>
            <person name="Halpern A.L."/>
            <person name="Mobarry C.M."/>
            <person name="Lippert R."/>
            <person name="Walenz B."/>
            <person name="Shatkay H."/>
            <person name="Dew I."/>
            <person name="Miller J.R."/>
            <person name="Flanigan M.J."/>
            <person name="Edwards N.J."/>
            <person name="Bolanos R."/>
            <person name="Fasulo D."/>
            <person name="Halldorsson B.V."/>
            <person name="Hannenhalli S."/>
            <person name="Turner R."/>
            <person name="Yooseph S."/>
            <person name="Lu F."/>
            <person name="Nusskern D.R."/>
            <person name="Shue B.C."/>
            <person name="Zheng X.H."/>
            <person name="Zhong F."/>
            <person name="Delcher A.L."/>
            <person name="Huson D.H."/>
            <person name="Kravitz S.A."/>
            <person name="Mouchard L."/>
            <person name="Reinert K."/>
            <person name="Remington K.A."/>
            <person name="Clark A.G."/>
            <person name="Waterman M.S."/>
            <person name="Eichler E.E."/>
            <person name="Adams M.D."/>
            <person name="Hunkapiller M.W."/>
            <person name="Myers E.W."/>
            <person name="Venter J.C."/>
        </authorList>
    </citation>
    <scope>NUCLEOTIDE SEQUENCE [LARGE SCALE GENOMIC DNA]</scope>
</reference>
<reference key="7">
    <citation type="journal article" date="2004" name="Genome Res.">
        <title>The status, quality, and expansion of the NIH full-length cDNA project: the Mammalian Gene Collection (MGC).</title>
        <authorList>
            <consortium name="The MGC Project Team"/>
        </authorList>
    </citation>
    <scope>NUCLEOTIDE SEQUENCE [LARGE SCALE MRNA] (ISOFORM 1)</scope>
    <source>
        <tissue>Brain</tissue>
    </source>
</reference>
<reference key="8">
    <citation type="journal article" date="2004" name="Genome Biol.">
        <title>An unappreciated role for RNA surveillance.</title>
        <authorList>
            <person name="Hillman R.T."/>
            <person name="Green R.E."/>
            <person name="Brenner S.E."/>
        </authorList>
    </citation>
    <scope>SPLICE ISOFORM(S) THAT ARE POTENTIAL NMD TARGET(S)</scope>
</reference>
<gene>
    <name type="primary">MAP3K7CL</name>
    <name type="synonym">C21orf7</name>
    <name type="synonym">TAK1L</name>
</gene>
<name>M3KCL_HUMAN</name>
<accession>P57077</accession>
<accession>D3DSE0</accession>
<accession>Q8TCL9</accession>
<evidence type="ECO:0000269" key="1">
    <source>
    </source>
</evidence>
<evidence type="ECO:0000303" key="2">
    <source ref="1"/>
</evidence>
<evidence type="ECO:0000305" key="3"/>
<proteinExistence type="evidence at protein level"/>
<sequence length="142" mass="16372">MISTARVPADKPVRIAFSLNDASDDTPPEDSIPLVFPELDQQLQPLPPCHDSEESMEVFKQHCQIAEEYHEVKKEITLLEQRKKELIAKLDQAEKEKVDAAELVREFEALTEENRTLRLAQSQCVEQLEKLRIQYQKRQGSS</sequence>
<keyword id="KW-0025">Alternative splicing</keyword>
<keyword id="KW-1267">Proteomics identification</keyword>
<keyword id="KW-1185">Reference proteome</keyword>
<feature type="chain" id="PRO_0000072423" description="MAP3K7 C-terminal-like protein">
    <location>
        <begin position="1"/>
        <end position="142"/>
    </location>
</feature>
<feature type="splice variant" id="VSP_060759" description="In isoform 2.">
    <original>MISTARVPADKPVRIAFSLNDAS</original>
    <variation>MVQLIAPLEVMWNEAADLKPLALSRRLECSGGIMAHYSPDLLGPEMESRYFAQVGLEHLASSSPPAFGFLKCLDYSISVLCSATSLAMLEDNPKVSKLATGDWMLTLKPKSITVPVEIPSSPL</variation>
    <location>
        <begin position="1"/>
        <end position="23"/>
    </location>
</feature>
<feature type="sequence conflict" description="In Ref. 4; CAD28500." evidence="3" ref="4">
    <original>K</original>
    <variation>R</variation>
    <location>
        <position position="60"/>
    </location>
</feature>
<feature type="sequence conflict" description="In Ref. 4; CAD28500." evidence="3" ref="4">
    <original>H</original>
    <variation>L</variation>
    <location>
        <position position="70"/>
    </location>
</feature>
<feature type="sequence conflict" description="In Ref. 4; CAD28500." evidence="3" ref="4">
    <original>K</original>
    <variation>E</variation>
    <location>
        <position position="95"/>
    </location>
</feature>
<feature type="sequence variant" id="VAR_083830" description="In dbSNP:rs3746843.">
    <original>I</original>
    <variation>V</variation>
    <location sequence="P57077-1">
        <position position="112"/>
    </location>
</feature>
<dbReference type="EMBL" id="AF269161">
    <property type="protein sequence ID" value="AAF81751.1"/>
    <property type="molecule type" value="mRNA"/>
</dbReference>
<dbReference type="EMBL" id="AF269162">
    <property type="protein sequence ID" value="AAF81752.1"/>
    <property type="status" value="ALT_SEQ"/>
    <property type="molecule type" value="mRNA"/>
</dbReference>
<dbReference type="EMBL" id="AF269163">
    <property type="protein sequence ID" value="AAF81753.1"/>
    <property type="status" value="ALT_SEQ"/>
    <property type="molecule type" value="mRNA"/>
</dbReference>
<dbReference type="EMBL" id="AF269164">
    <property type="protein sequence ID" value="AAF81754.1"/>
    <property type="molecule type" value="mRNA"/>
</dbReference>
<dbReference type="EMBL" id="AY033900">
    <property type="protein sequence ID" value="AAK68718.1"/>
    <property type="molecule type" value="mRNA"/>
</dbReference>
<dbReference type="EMBL" id="AY171599">
    <property type="protein sequence ID" value="AAO16519.1"/>
    <property type="molecule type" value="mRNA"/>
</dbReference>
<dbReference type="EMBL" id="AL713701">
    <property type="protein sequence ID" value="CAD28500.1"/>
    <property type="molecule type" value="mRNA"/>
</dbReference>
<dbReference type="EMBL" id="AL163249">
    <property type="protein sequence ID" value="CAB90434.1"/>
    <property type="status" value="ALT_SEQ"/>
    <property type="molecule type" value="Genomic_DNA"/>
</dbReference>
<dbReference type="EMBL" id="CH471079">
    <property type="protein sequence ID" value="EAX09921.1"/>
    <property type="molecule type" value="Genomic_DNA"/>
</dbReference>
<dbReference type="EMBL" id="CH471079">
    <property type="protein sequence ID" value="EAX09923.1"/>
    <property type="molecule type" value="Genomic_DNA"/>
</dbReference>
<dbReference type="EMBL" id="BC008567">
    <property type="protein sequence ID" value="AAH08567.1"/>
    <property type="molecule type" value="mRNA"/>
</dbReference>
<dbReference type="CCDS" id="CCDS13584.1">
    <molecule id="P57077-1"/>
</dbReference>
<dbReference type="CCDS" id="CCDS68182.1">
    <molecule id="P57077-4"/>
</dbReference>
<dbReference type="RefSeq" id="NP_001273546.1">
    <molecule id="P57077-4"/>
    <property type="nucleotide sequence ID" value="NM_001286617.2"/>
</dbReference>
<dbReference type="RefSeq" id="NP_001273547.1">
    <molecule id="P57077-4"/>
    <property type="nucleotide sequence ID" value="NM_001286618.2"/>
</dbReference>
<dbReference type="RefSeq" id="NP_001273548.1">
    <molecule id="P57077-4"/>
    <property type="nucleotide sequence ID" value="NM_001286619.2"/>
</dbReference>
<dbReference type="RefSeq" id="NP_001273549.1">
    <molecule id="P57077-4"/>
    <property type="nucleotide sequence ID" value="NM_001286620.2"/>
</dbReference>
<dbReference type="RefSeq" id="NP_001273551.1">
    <property type="nucleotide sequence ID" value="NM_001286622.1"/>
</dbReference>
<dbReference type="RefSeq" id="NP_001273553.1">
    <property type="nucleotide sequence ID" value="NM_001286624.1"/>
</dbReference>
<dbReference type="RefSeq" id="NP_001273563.1">
    <molecule id="P57077-1"/>
    <property type="nucleotide sequence ID" value="NM_001286634.2"/>
</dbReference>
<dbReference type="RefSeq" id="NP_001358298.1">
    <molecule id="P57077-1"/>
    <property type="nucleotide sequence ID" value="NM_001371369.1"/>
</dbReference>
<dbReference type="RefSeq" id="NP_001358301.1">
    <molecule id="P57077-4"/>
    <property type="nucleotide sequence ID" value="NM_001371372.1"/>
</dbReference>
<dbReference type="RefSeq" id="NP_001358302.1">
    <molecule id="P57077-4"/>
    <property type="nucleotide sequence ID" value="NM_001371373.1"/>
</dbReference>
<dbReference type="RefSeq" id="NP_001358303.1">
    <molecule id="P57077-4"/>
    <property type="nucleotide sequence ID" value="NM_001371374.1"/>
</dbReference>
<dbReference type="RefSeq" id="NP_064537.1">
    <molecule id="P57077-1"/>
    <property type="nucleotide sequence ID" value="NM_020152.4"/>
</dbReference>
<dbReference type="SMR" id="P57077"/>
<dbReference type="BioGRID" id="121239">
    <property type="interactions" value="11"/>
</dbReference>
<dbReference type="FunCoup" id="P57077">
    <property type="interactions" value="1750"/>
</dbReference>
<dbReference type="IntAct" id="P57077">
    <property type="interactions" value="9"/>
</dbReference>
<dbReference type="STRING" id="9606.ENSP00000382828"/>
<dbReference type="iPTMnet" id="P57077"/>
<dbReference type="BioMuta" id="MAP3K7CL"/>
<dbReference type="DMDM" id="10719918"/>
<dbReference type="MassIVE" id="P57077"/>
<dbReference type="PaxDb" id="9606-ENSP00000382828"/>
<dbReference type="PeptideAtlas" id="P57077"/>
<dbReference type="Antibodypedia" id="6479">
    <property type="antibodies" value="144 antibodies from 18 providers"/>
</dbReference>
<dbReference type="DNASU" id="56911"/>
<dbReference type="Ensembl" id="ENST00000339024.8">
    <molecule id="P57077-4"/>
    <property type="protein sequence ID" value="ENSP00000345777.4"/>
    <property type="gene ID" value="ENSG00000156265.17"/>
</dbReference>
<dbReference type="Ensembl" id="ENST00000341618.8">
    <molecule id="P57077-1"/>
    <property type="protein sequence ID" value="ENSP00000343212.4"/>
    <property type="gene ID" value="ENSG00000156265.17"/>
</dbReference>
<dbReference type="Ensembl" id="ENST00000399925.5">
    <molecule id="P57077-4"/>
    <property type="protein sequence ID" value="ENSP00000382809.1"/>
    <property type="gene ID" value="ENSG00000156265.17"/>
</dbReference>
<dbReference type="Ensembl" id="ENST00000399926.5">
    <molecule id="P57077-4"/>
    <property type="protein sequence ID" value="ENSP00000382810.1"/>
    <property type="gene ID" value="ENSG00000156265.17"/>
</dbReference>
<dbReference type="Ensembl" id="ENST00000399928.6">
    <molecule id="P57077-4"/>
    <property type="protein sequence ID" value="ENSP00000382812.1"/>
    <property type="gene ID" value="ENSG00000156265.17"/>
</dbReference>
<dbReference type="Ensembl" id="ENST00000399934.5">
    <molecule id="P57077-4"/>
    <property type="protein sequence ID" value="ENSP00000382816.1"/>
    <property type="gene ID" value="ENSG00000156265.17"/>
</dbReference>
<dbReference type="Ensembl" id="ENST00000399935.6">
    <molecule id="P57077-4"/>
    <property type="protein sequence ID" value="ENSP00000382817.2"/>
    <property type="gene ID" value="ENSG00000156265.17"/>
</dbReference>
<dbReference type="Ensembl" id="ENST00000399947.6">
    <molecule id="P57077-1"/>
    <property type="protein sequence ID" value="ENSP00000382828.2"/>
    <property type="gene ID" value="ENSG00000156265.17"/>
</dbReference>
<dbReference type="Ensembl" id="ENST00000707854.1">
    <molecule id="P57077-1"/>
    <property type="protein sequence ID" value="ENSP00000517001.1"/>
    <property type="gene ID" value="ENSG00000291525.1"/>
</dbReference>
<dbReference type="Ensembl" id="ENST00000707857.1">
    <molecule id="P57077-1"/>
    <property type="protein sequence ID" value="ENSP00000517004.1"/>
    <property type="gene ID" value="ENSG00000291525.1"/>
</dbReference>
<dbReference type="Ensembl" id="ENST00000707858.1">
    <molecule id="P57077-4"/>
    <property type="protein sequence ID" value="ENSP00000517005.1"/>
    <property type="gene ID" value="ENSG00000291525.1"/>
</dbReference>
<dbReference type="Ensembl" id="ENST00000707860.1">
    <molecule id="P57077-4"/>
    <property type="protein sequence ID" value="ENSP00000517006.1"/>
    <property type="gene ID" value="ENSG00000291525.1"/>
</dbReference>
<dbReference type="Ensembl" id="ENST00000707861.1">
    <molecule id="P57077-4"/>
    <property type="protein sequence ID" value="ENSP00000517007.1"/>
    <property type="gene ID" value="ENSG00000291525.1"/>
</dbReference>
<dbReference type="Ensembl" id="ENST00000707862.1">
    <molecule id="P57077-4"/>
    <property type="protein sequence ID" value="ENSP00000517008.1"/>
    <property type="gene ID" value="ENSG00000291525.1"/>
</dbReference>
<dbReference type="GeneID" id="56911"/>
<dbReference type="KEGG" id="hsa:56911"/>
<dbReference type="MANE-Select" id="ENST00000399928.6">
    <property type="protein sequence ID" value="ENSP00000382812.1"/>
    <property type="RefSeq nucleotide sequence ID" value="NM_001286620.2"/>
    <property type="RefSeq protein sequence ID" value="NP_001273549.1"/>
</dbReference>
<dbReference type="UCSC" id="uc002ynd.5">
    <molecule id="P57077-4"/>
    <property type="organism name" value="human"/>
</dbReference>
<dbReference type="AGR" id="HGNC:16457"/>
<dbReference type="CTD" id="56911"/>
<dbReference type="DisGeNET" id="56911"/>
<dbReference type="GeneCards" id="MAP3K7CL"/>
<dbReference type="HGNC" id="HGNC:16457">
    <property type="gene designation" value="MAP3K7CL"/>
</dbReference>
<dbReference type="HPA" id="ENSG00000156265">
    <property type="expression patterns" value="Tissue enhanced (skeletal muscle, tongue)"/>
</dbReference>
<dbReference type="MIM" id="611110">
    <property type="type" value="gene"/>
</dbReference>
<dbReference type="neXtProt" id="NX_P57077"/>
<dbReference type="OpenTargets" id="ENSG00000156265"/>
<dbReference type="PharmGKB" id="PA25864"/>
<dbReference type="VEuPathDB" id="HostDB:ENSG00000156265"/>
<dbReference type="eggNOG" id="ENOG502S2UX">
    <property type="taxonomic scope" value="Eukaryota"/>
</dbReference>
<dbReference type="GeneTree" id="ENSGT00770000120675"/>
<dbReference type="HOGENOM" id="CLU_100451_0_0_1"/>
<dbReference type="InParanoid" id="P57077"/>
<dbReference type="OMA" id="MAREFHH"/>
<dbReference type="OrthoDB" id="8866809at2759"/>
<dbReference type="PAN-GO" id="P57077">
    <property type="GO annotations" value="0 GO annotations based on evolutionary models"/>
</dbReference>
<dbReference type="PhylomeDB" id="P57077"/>
<dbReference type="TreeFam" id="TF335499"/>
<dbReference type="PathwayCommons" id="P57077"/>
<dbReference type="SignaLink" id="P57077"/>
<dbReference type="BioGRID-ORCS" id="56911">
    <property type="hits" value="20 hits in 1136 CRISPR screens"/>
</dbReference>
<dbReference type="ChiTaRS" id="MAP3K7CL">
    <property type="organism name" value="human"/>
</dbReference>
<dbReference type="GeneWiki" id="C21orf7"/>
<dbReference type="GenomeRNAi" id="56911"/>
<dbReference type="Pharos" id="P57077">
    <property type="development level" value="Tbio"/>
</dbReference>
<dbReference type="PRO" id="PR:P57077"/>
<dbReference type="Proteomes" id="UP000005640">
    <property type="component" value="Chromosome 21"/>
</dbReference>
<dbReference type="RNAct" id="P57077">
    <property type="molecule type" value="protein"/>
</dbReference>
<dbReference type="Bgee" id="ENSG00000156265">
    <property type="expression patterns" value="Expressed in monocyte and 127 other cell types or tissues"/>
</dbReference>
<dbReference type="ExpressionAtlas" id="P57077">
    <property type="expression patterns" value="baseline and differential"/>
</dbReference>
<dbReference type="GO" id="GO:0005829">
    <property type="term" value="C:cytosol"/>
    <property type="evidence" value="ECO:0007005"/>
    <property type="project" value="UniProtKB"/>
</dbReference>
<dbReference type="GO" id="GO:0005634">
    <property type="term" value="C:nucleus"/>
    <property type="evidence" value="ECO:0007005"/>
    <property type="project" value="UniProtKB"/>
</dbReference>
<dbReference type="InterPro" id="IPR042800">
    <property type="entry name" value="Map3k7cl"/>
</dbReference>
<dbReference type="PANTHER" id="PTHR47140">
    <property type="entry name" value="MAP3K7 C-TERMINAL-LIKE PROTEIN"/>
    <property type="match status" value="1"/>
</dbReference>
<dbReference type="PANTHER" id="PTHR47140:SF1">
    <property type="entry name" value="MAP3K7 C-TERMINAL-LIKE PROTEIN"/>
    <property type="match status" value="1"/>
</dbReference>
<organism>
    <name type="scientific">Homo sapiens</name>
    <name type="common">Human</name>
    <dbReference type="NCBI Taxonomy" id="9606"/>
    <lineage>
        <taxon>Eukaryota</taxon>
        <taxon>Metazoa</taxon>
        <taxon>Chordata</taxon>
        <taxon>Craniata</taxon>
        <taxon>Vertebrata</taxon>
        <taxon>Euteleostomi</taxon>
        <taxon>Mammalia</taxon>
        <taxon>Eutheria</taxon>
        <taxon>Euarchontoglires</taxon>
        <taxon>Primates</taxon>
        <taxon>Haplorrhini</taxon>
        <taxon>Catarrhini</taxon>
        <taxon>Hominidae</taxon>
        <taxon>Homo</taxon>
    </lineage>
</organism>